<keyword id="KW-0650">Protein phosphatase inhibitor</keyword>
<keyword id="KW-1185">Reference proteome</keyword>
<feature type="chain" id="PRO_0000089894" description="Protein phosphatase 1 regulatory subunit 36">
    <location>
        <begin position="1"/>
        <end position="411"/>
    </location>
</feature>
<comment type="function">
    <text evidence="1">Inhibits phosphatase activity of protein phosphatase 1 (PP1) complexes.</text>
</comment>
<comment type="subunit">
    <text evidence="1">Interacts with PPP1CA.</text>
</comment>
<evidence type="ECO:0000250" key="1"/>
<organism>
    <name type="scientific">Rattus norvegicus</name>
    <name type="common">Rat</name>
    <dbReference type="NCBI Taxonomy" id="10116"/>
    <lineage>
        <taxon>Eukaryota</taxon>
        <taxon>Metazoa</taxon>
        <taxon>Chordata</taxon>
        <taxon>Craniata</taxon>
        <taxon>Vertebrata</taxon>
        <taxon>Euteleostomi</taxon>
        <taxon>Mammalia</taxon>
        <taxon>Eutheria</taxon>
        <taxon>Euarchontoglires</taxon>
        <taxon>Glires</taxon>
        <taxon>Rodentia</taxon>
        <taxon>Myomorpha</taxon>
        <taxon>Muroidea</taxon>
        <taxon>Muridae</taxon>
        <taxon>Murinae</taxon>
        <taxon>Rattus</taxon>
    </lineage>
</organism>
<accession>Q68FW6</accession>
<reference key="1">
    <citation type="journal article" date="2004" name="Genome Res.">
        <title>The status, quality, and expansion of the NIH full-length cDNA project: the Mammalian Gene Collection (MGC).</title>
        <authorList>
            <consortium name="The MGC Project Team"/>
        </authorList>
    </citation>
    <scope>NUCLEOTIDE SEQUENCE [LARGE SCALE MRNA]</scope>
    <source>
        <tissue>Kidney</tissue>
    </source>
</reference>
<protein>
    <recommendedName>
        <fullName>Protein phosphatase 1 regulatory subunit 36</fullName>
    </recommendedName>
</protein>
<dbReference type="EMBL" id="BC079166">
    <property type="protein sequence ID" value="AAH79166.1"/>
    <property type="molecule type" value="mRNA"/>
</dbReference>
<dbReference type="RefSeq" id="NP_001013966.1">
    <property type="nucleotide sequence ID" value="NM_001013944.1"/>
</dbReference>
<dbReference type="SMR" id="Q68FW6"/>
<dbReference type="FunCoup" id="Q68FW6">
    <property type="interactions" value="14"/>
</dbReference>
<dbReference type="STRING" id="10116.ENSRNOP00000055437"/>
<dbReference type="PhosphoSitePlus" id="Q68FW6"/>
<dbReference type="PaxDb" id="10116-ENSRNOP00000055437"/>
<dbReference type="Ensembl" id="ENSRNOT00000058642.5">
    <property type="protein sequence ID" value="ENSRNOP00000055437.3"/>
    <property type="gene ID" value="ENSRNOG00000038480.5"/>
</dbReference>
<dbReference type="GeneID" id="299153"/>
<dbReference type="KEGG" id="rno:299153"/>
<dbReference type="UCSC" id="RGD:1309051">
    <property type="organism name" value="rat"/>
</dbReference>
<dbReference type="AGR" id="RGD:1309051"/>
<dbReference type="CTD" id="145376"/>
<dbReference type="RGD" id="1309051">
    <property type="gene designation" value="Ppp1r36"/>
</dbReference>
<dbReference type="eggNOG" id="ENOG502RH2T">
    <property type="taxonomic scope" value="Eukaryota"/>
</dbReference>
<dbReference type="GeneTree" id="ENSGT00390000012412"/>
<dbReference type="HOGENOM" id="CLU_053706_0_0_1"/>
<dbReference type="InParanoid" id="Q68FW6"/>
<dbReference type="OMA" id="PAQMQEH"/>
<dbReference type="OrthoDB" id="6724830at2759"/>
<dbReference type="PhylomeDB" id="Q68FW6"/>
<dbReference type="PRO" id="PR:Q68FW6"/>
<dbReference type="Proteomes" id="UP000002494">
    <property type="component" value="Chromosome 6"/>
</dbReference>
<dbReference type="Bgee" id="ENSRNOG00000038480">
    <property type="expression patterns" value="Expressed in testis and 19 other cell types or tissues"/>
</dbReference>
<dbReference type="GO" id="GO:0019902">
    <property type="term" value="F:phosphatase binding"/>
    <property type="evidence" value="ECO:0007669"/>
    <property type="project" value="InterPro"/>
</dbReference>
<dbReference type="GO" id="GO:0004864">
    <property type="term" value="F:protein phosphatase inhibitor activity"/>
    <property type="evidence" value="ECO:0007669"/>
    <property type="project" value="UniProtKB-KW"/>
</dbReference>
<dbReference type="InterPro" id="IPR026142">
    <property type="entry name" value="Pro_pase_1_reg_su_36"/>
</dbReference>
<dbReference type="PANTHER" id="PTHR21055">
    <property type="entry name" value="PROTEIN PHOSPHATASE 1 REGULATORY SUBUNIT 36"/>
    <property type="match status" value="1"/>
</dbReference>
<dbReference type="PANTHER" id="PTHR21055:SF3">
    <property type="entry name" value="PROTEIN PHOSPHATASE 1 REGULATORY SUBUNIT 36"/>
    <property type="match status" value="1"/>
</dbReference>
<dbReference type="Pfam" id="PF14895">
    <property type="entry name" value="PPPI_inhib"/>
    <property type="match status" value="1"/>
</dbReference>
<proteinExistence type="evidence at transcript level"/>
<name>PPR36_RAT</name>
<gene>
    <name type="primary">Ppp1r36</name>
</gene>
<sequence>MYKGETLFSIPELYPRRKQFVGQSSTRLDQCGLRLGMWYWKDETKSLEFRSFTPAVELKEKGKKGKAVHFAEMDGTASERLTDKRFVPRDEKSAKTLEKRGQQGNVTLDDVKFVALLSLQDTEMQRVCSFTTFMRNKSLDSFLMALLYYLSYYLERLSMEKKPQSYMVGLVEKKEIELVMSKLEDAQKYLAQKYCKLVLGVGMADKHHMNCGKDKISDTQKDWKFFESFYTFCTCIAWIVFRRQYLKEIEEEVGRLFRTNMFNIPRRKREDEESGGEKKRMTLVQFRRMMAKRPAIKKAMDMRSPVLSTLLPSLREKAQHIAEKKYVAGIKLQPRVEKDITNLESVVMPVVGILGEPRNLFNPHTLLPLESEENGKTSGRNSSIVERNNTSIQNTLNLVMSKLTSQNSFPK</sequence>